<organism>
    <name type="scientific">Xylella fastidiosa (strain 9a5c)</name>
    <dbReference type="NCBI Taxonomy" id="160492"/>
    <lineage>
        <taxon>Bacteria</taxon>
        <taxon>Pseudomonadati</taxon>
        <taxon>Pseudomonadota</taxon>
        <taxon>Gammaproteobacteria</taxon>
        <taxon>Lysobacterales</taxon>
        <taxon>Lysobacteraceae</taxon>
        <taxon>Xylella</taxon>
    </lineage>
</organism>
<proteinExistence type="inferred from homology"/>
<accession>Q9PER1</accession>
<name>UVRB_XYLFA</name>
<gene>
    <name evidence="1" type="primary">uvrB</name>
    <name type="ordered locus">XF_0967</name>
</gene>
<sequence length="669" mass="75558">MTGLFQLVSSYSPSGDQPTAVQKLVTNFHAGIAKQVLLGVTGSGKTYTIANVVEQIQKPTLVMAPNKTLAAQLYGEFKAFFPHNAVEYFVSYYDYYQPEAYVPASDTFIEKDSSINEYIEQMRLAATKALLSRSDVLVVATVSAIYGLGAPEDYLSLRLILSLGEHIEQRQLIRHLTELQYTRNELDLVRGSFRVRGEVVDVFPAESEMEALRIELFDGEIESLSLFDPLTGQTVRKLQRYSVYPKTHYATTRERTLSAVDTIKDELKEYLELLYGRNKLVEAQRLAQRTQFDLEMMAEVGYCNGIENYSRHLTGKAPGEPPPTLFDYLPPDALLVIDESHVTIPQIGAMFKGDRSRKETLVEFGFRLPSALDNRPLRFEEWEVRSPRSIYVSATPGSYEFRESAGEVIELLVRPTGLIDPEIEIRPVATQVDDLISQINVCIKLGDRVLVTTLTKRMAENLTEYLSEQGIRIRYLHSEIDTVERVEIIRDLRLGKFDVLVGINLLREGLDMPEVSLVAILDADKEGFLRSTSSLIQTIGRAARSVRGRAILYADKVTRSMRAAIDETERRRQKQKEYNAENGIVPKSVVRPISDILEGARDGVEVKSKGKGRRVDEVPADYCALNQAEIAAQMKVLEQQMYQHARDLEFEDAARIRDQIQRLREAGLG</sequence>
<protein>
    <recommendedName>
        <fullName evidence="1">UvrABC system protein B</fullName>
        <shortName evidence="1">Protein UvrB</shortName>
    </recommendedName>
    <alternativeName>
        <fullName evidence="1">Excinuclease ABC subunit B</fullName>
    </alternativeName>
</protein>
<dbReference type="EMBL" id="AE003849">
    <property type="protein sequence ID" value="AAF83777.1"/>
    <property type="molecule type" value="Genomic_DNA"/>
</dbReference>
<dbReference type="PIR" id="D82739">
    <property type="entry name" value="D82739"/>
</dbReference>
<dbReference type="RefSeq" id="WP_010893486.1">
    <property type="nucleotide sequence ID" value="NC_002488.3"/>
</dbReference>
<dbReference type="SMR" id="Q9PER1"/>
<dbReference type="STRING" id="160492.XF_0967"/>
<dbReference type="KEGG" id="xfa:XF_0967"/>
<dbReference type="eggNOG" id="COG0556">
    <property type="taxonomic scope" value="Bacteria"/>
</dbReference>
<dbReference type="HOGENOM" id="CLU_009621_2_1_6"/>
<dbReference type="Proteomes" id="UP000000812">
    <property type="component" value="Chromosome"/>
</dbReference>
<dbReference type="GO" id="GO:0005737">
    <property type="term" value="C:cytoplasm"/>
    <property type="evidence" value="ECO:0007669"/>
    <property type="project" value="UniProtKB-SubCell"/>
</dbReference>
<dbReference type="GO" id="GO:0009380">
    <property type="term" value="C:excinuclease repair complex"/>
    <property type="evidence" value="ECO:0007669"/>
    <property type="project" value="InterPro"/>
</dbReference>
<dbReference type="GO" id="GO:0005524">
    <property type="term" value="F:ATP binding"/>
    <property type="evidence" value="ECO:0007669"/>
    <property type="project" value="UniProtKB-UniRule"/>
</dbReference>
<dbReference type="GO" id="GO:0016887">
    <property type="term" value="F:ATP hydrolysis activity"/>
    <property type="evidence" value="ECO:0007669"/>
    <property type="project" value="InterPro"/>
</dbReference>
<dbReference type="GO" id="GO:0003677">
    <property type="term" value="F:DNA binding"/>
    <property type="evidence" value="ECO:0007669"/>
    <property type="project" value="UniProtKB-UniRule"/>
</dbReference>
<dbReference type="GO" id="GO:0009381">
    <property type="term" value="F:excinuclease ABC activity"/>
    <property type="evidence" value="ECO:0007669"/>
    <property type="project" value="UniProtKB-UniRule"/>
</dbReference>
<dbReference type="GO" id="GO:0006289">
    <property type="term" value="P:nucleotide-excision repair"/>
    <property type="evidence" value="ECO:0007669"/>
    <property type="project" value="UniProtKB-UniRule"/>
</dbReference>
<dbReference type="GO" id="GO:0009432">
    <property type="term" value="P:SOS response"/>
    <property type="evidence" value="ECO:0007669"/>
    <property type="project" value="UniProtKB-UniRule"/>
</dbReference>
<dbReference type="CDD" id="cd17916">
    <property type="entry name" value="DEXHc_UvrB"/>
    <property type="match status" value="1"/>
</dbReference>
<dbReference type="CDD" id="cd18790">
    <property type="entry name" value="SF2_C_UvrB"/>
    <property type="match status" value="1"/>
</dbReference>
<dbReference type="FunFam" id="3.40.50.300:FF:000477">
    <property type="entry name" value="UvrABC system protein B"/>
    <property type="match status" value="1"/>
</dbReference>
<dbReference type="Gene3D" id="3.40.50.300">
    <property type="entry name" value="P-loop containing nucleotide triphosphate hydrolases"/>
    <property type="match status" value="3"/>
</dbReference>
<dbReference type="Gene3D" id="4.10.860.10">
    <property type="entry name" value="UVR domain"/>
    <property type="match status" value="1"/>
</dbReference>
<dbReference type="HAMAP" id="MF_00204">
    <property type="entry name" value="UvrB"/>
    <property type="match status" value="1"/>
</dbReference>
<dbReference type="InterPro" id="IPR006935">
    <property type="entry name" value="Helicase/UvrB_N"/>
</dbReference>
<dbReference type="InterPro" id="IPR014001">
    <property type="entry name" value="Helicase_ATP-bd"/>
</dbReference>
<dbReference type="InterPro" id="IPR001650">
    <property type="entry name" value="Helicase_C-like"/>
</dbReference>
<dbReference type="InterPro" id="IPR027417">
    <property type="entry name" value="P-loop_NTPase"/>
</dbReference>
<dbReference type="InterPro" id="IPR001943">
    <property type="entry name" value="UVR_dom"/>
</dbReference>
<dbReference type="InterPro" id="IPR036876">
    <property type="entry name" value="UVR_dom_sf"/>
</dbReference>
<dbReference type="InterPro" id="IPR004807">
    <property type="entry name" value="UvrB"/>
</dbReference>
<dbReference type="InterPro" id="IPR041471">
    <property type="entry name" value="UvrB_inter"/>
</dbReference>
<dbReference type="InterPro" id="IPR024759">
    <property type="entry name" value="UvrB_YAD/RRR_dom"/>
</dbReference>
<dbReference type="NCBIfam" id="NF003673">
    <property type="entry name" value="PRK05298.1"/>
    <property type="match status" value="1"/>
</dbReference>
<dbReference type="NCBIfam" id="TIGR00631">
    <property type="entry name" value="uvrb"/>
    <property type="match status" value="1"/>
</dbReference>
<dbReference type="PANTHER" id="PTHR24029">
    <property type="entry name" value="UVRABC SYSTEM PROTEIN B"/>
    <property type="match status" value="1"/>
</dbReference>
<dbReference type="PANTHER" id="PTHR24029:SF0">
    <property type="entry name" value="UVRABC SYSTEM PROTEIN B"/>
    <property type="match status" value="1"/>
</dbReference>
<dbReference type="Pfam" id="PF00271">
    <property type="entry name" value="Helicase_C"/>
    <property type="match status" value="1"/>
</dbReference>
<dbReference type="Pfam" id="PF04851">
    <property type="entry name" value="ResIII"/>
    <property type="match status" value="1"/>
</dbReference>
<dbReference type="Pfam" id="PF02151">
    <property type="entry name" value="UVR"/>
    <property type="match status" value="1"/>
</dbReference>
<dbReference type="Pfam" id="PF12344">
    <property type="entry name" value="UvrB"/>
    <property type="match status" value="1"/>
</dbReference>
<dbReference type="Pfam" id="PF17757">
    <property type="entry name" value="UvrB_inter"/>
    <property type="match status" value="1"/>
</dbReference>
<dbReference type="SMART" id="SM00487">
    <property type="entry name" value="DEXDc"/>
    <property type="match status" value="1"/>
</dbReference>
<dbReference type="SMART" id="SM00490">
    <property type="entry name" value="HELICc"/>
    <property type="match status" value="1"/>
</dbReference>
<dbReference type="SUPFAM" id="SSF46600">
    <property type="entry name" value="C-terminal UvrC-binding domain of UvrB"/>
    <property type="match status" value="1"/>
</dbReference>
<dbReference type="SUPFAM" id="SSF52540">
    <property type="entry name" value="P-loop containing nucleoside triphosphate hydrolases"/>
    <property type="match status" value="2"/>
</dbReference>
<dbReference type="PROSITE" id="PS51192">
    <property type="entry name" value="HELICASE_ATP_BIND_1"/>
    <property type="match status" value="1"/>
</dbReference>
<dbReference type="PROSITE" id="PS51194">
    <property type="entry name" value="HELICASE_CTER"/>
    <property type="match status" value="1"/>
</dbReference>
<dbReference type="PROSITE" id="PS50151">
    <property type="entry name" value="UVR"/>
    <property type="match status" value="1"/>
</dbReference>
<keyword id="KW-0067">ATP-binding</keyword>
<keyword id="KW-0963">Cytoplasm</keyword>
<keyword id="KW-0227">DNA damage</keyword>
<keyword id="KW-0228">DNA excision</keyword>
<keyword id="KW-0234">DNA repair</keyword>
<keyword id="KW-0267">Excision nuclease</keyword>
<keyword id="KW-0547">Nucleotide-binding</keyword>
<keyword id="KW-0742">SOS response</keyword>
<reference key="1">
    <citation type="journal article" date="2000" name="Nature">
        <title>The genome sequence of the plant pathogen Xylella fastidiosa.</title>
        <authorList>
            <person name="Simpson A.J.G."/>
            <person name="Reinach F.C."/>
            <person name="Arruda P."/>
            <person name="Abreu F.A."/>
            <person name="Acencio M."/>
            <person name="Alvarenga R."/>
            <person name="Alves L.M.C."/>
            <person name="Araya J.E."/>
            <person name="Baia G.S."/>
            <person name="Baptista C.S."/>
            <person name="Barros M.H."/>
            <person name="Bonaccorsi E.D."/>
            <person name="Bordin S."/>
            <person name="Bove J.M."/>
            <person name="Briones M.R.S."/>
            <person name="Bueno M.R.P."/>
            <person name="Camargo A.A."/>
            <person name="Camargo L.E.A."/>
            <person name="Carraro D.M."/>
            <person name="Carrer H."/>
            <person name="Colauto N.B."/>
            <person name="Colombo C."/>
            <person name="Costa F.F."/>
            <person name="Costa M.C.R."/>
            <person name="Costa-Neto C.M."/>
            <person name="Coutinho L.L."/>
            <person name="Cristofani M."/>
            <person name="Dias-Neto E."/>
            <person name="Docena C."/>
            <person name="El-Dorry H."/>
            <person name="Facincani A.P."/>
            <person name="Ferreira A.J.S."/>
            <person name="Ferreira V.C.A."/>
            <person name="Ferro J.A."/>
            <person name="Fraga J.S."/>
            <person name="Franca S.C."/>
            <person name="Franco M.C."/>
            <person name="Frohme M."/>
            <person name="Furlan L.R."/>
            <person name="Garnier M."/>
            <person name="Goldman G.H."/>
            <person name="Goldman M.H.S."/>
            <person name="Gomes S.L."/>
            <person name="Gruber A."/>
            <person name="Ho P.L."/>
            <person name="Hoheisel J.D."/>
            <person name="Junqueira M.L."/>
            <person name="Kemper E.L."/>
            <person name="Kitajima J.P."/>
            <person name="Krieger J.E."/>
            <person name="Kuramae E.E."/>
            <person name="Laigret F."/>
            <person name="Lambais M.R."/>
            <person name="Leite L.C.C."/>
            <person name="Lemos E.G.M."/>
            <person name="Lemos M.V.F."/>
            <person name="Lopes S.A."/>
            <person name="Lopes C.R."/>
            <person name="Machado J.A."/>
            <person name="Machado M.A."/>
            <person name="Madeira A.M.B.N."/>
            <person name="Madeira H.M.F."/>
            <person name="Marino C.L."/>
            <person name="Marques M.V."/>
            <person name="Martins E.A.L."/>
            <person name="Martins E.M.F."/>
            <person name="Matsukuma A.Y."/>
            <person name="Menck C.F.M."/>
            <person name="Miracca E.C."/>
            <person name="Miyaki C.Y."/>
            <person name="Monteiro-Vitorello C.B."/>
            <person name="Moon D.H."/>
            <person name="Nagai M.A."/>
            <person name="Nascimento A.L.T.O."/>
            <person name="Netto L.E.S."/>
            <person name="Nhani A. Jr."/>
            <person name="Nobrega F.G."/>
            <person name="Nunes L.R."/>
            <person name="Oliveira M.A."/>
            <person name="de Oliveira M.C."/>
            <person name="de Oliveira R.C."/>
            <person name="Palmieri D.A."/>
            <person name="Paris A."/>
            <person name="Peixoto B.R."/>
            <person name="Pereira G.A.G."/>
            <person name="Pereira H.A. Jr."/>
            <person name="Pesquero J.B."/>
            <person name="Quaggio R.B."/>
            <person name="Roberto P.G."/>
            <person name="Rodrigues V."/>
            <person name="de Rosa A.J.M."/>
            <person name="de Rosa V.E. Jr."/>
            <person name="de Sa R.G."/>
            <person name="Santelli R.V."/>
            <person name="Sawasaki H.E."/>
            <person name="da Silva A.C.R."/>
            <person name="da Silva A.M."/>
            <person name="da Silva F.R."/>
            <person name="Silva W.A. Jr."/>
            <person name="da Silveira J.F."/>
            <person name="Silvestri M.L.Z."/>
            <person name="Siqueira W.J."/>
            <person name="de Souza A.A."/>
            <person name="de Souza A.P."/>
            <person name="Terenzi M.F."/>
            <person name="Truffi D."/>
            <person name="Tsai S.M."/>
            <person name="Tsuhako M.H."/>
            <person name="Vallada H."/>
            <person name="Van Sluys M.A."/>
            <person name="Verjovski-Almeida S."/>
            <person name="Vettore A.L."/>
            <person name="Zago M.A."/>
            <person name="Zatz M."/>
            <person name="Meidanis J."/>
            <person name="Setubal J.C."/>
        </authorList>
    </citation>
    <scope>NUCLEOTIDE SEQUENCE [LARGE SCALE GENOMIC DNA]</scope>
    <source>
        <strain>9a5c</strain>
    </source>
</reference>
<evidence type="ECO:0000255" key="1">
    <source>
        <dbReference type="HAMAP-Rule" id="MF_00204"/>
    </source>
</evidence>
<comment type="function">
    <text evidence="1">The UvrABC repair system catalyzes the recognition and processing of DNA lesions. A damage recognition complex composed of 2 UvrA and 2 UvrB subunits scans DNA for abnormalities. Upon binding of the UvrA(2)B(2) complex to a putative damaged site, the DNA wraps around one UvrB monomer. DNA wrap is dependent on ATP binding by UvrB and probably causes local melting of the DNA helix, facilitating insertion of UvrB beta-hairpin between the DNA strands. Then UvrB probes one DNA strand for the presence of a lesion. If a lesion is found the UvrA subunits dissociate and the UvrB-DNA preincision complex is formed. This complex is subsequently bound by UvrC and the second UvrB is released. If no lesion is found, the DNA wraps around the other UvrB subunit that will check the other stand for damage.</text>
</comment>
<comment type="subunit">
    <text evidence="1">Forms a heterotetramer with UvrA during the search for lesions. Interacts with UvrC in an incision complex.</text>
</comment>
<comment type="subcellular location">
    <subcellularLocation>
        <location evidence="1">Cytoplasm</location>
    </subcellularLocation>
</comment>
<comment type="domain">
    <text evidence="1">The beta-hairpin motif is involved in DNA binding.</text>
</comment>
<comment type="similarity">
    <text evidence="1">Belongs to the UvrB family.</text>
</comment>
<feature type="chain" id="PRO_0000138449" description="UvrABC system protein B">
    <location>
        <begin position="1"/>
        <end position="669"/>
    </location>
</feature>
<feature type="domain" description="Helicase ATP-binding" evidence="1">
    <location>
        <begin position="26"/>
        <end position="414"/>
    </location>
</feature>
<feature type="domain" description="Helicase C-terminal" evidence="1">
    <location>
        <begin position="435"/>
        <end position="597"/>
    </location>
</feature>
<feature type="domain" description="UVR" evidence="1">
    <location>
        <begin position="631"/>
        <end position="666"/>
    </location>
</feature>
<feature type="short sequence motif" description="Beta-hairpin">
    <location>
        <begin position="92"/>
        <end position="115"/>
    </location>
</feature>
<feature type="binding site" evidence="1">
    <location>
        <begin position="39"/>
        <end position="46"/>
    </location>
    <ligand>
        <name>ATP</name>
        <dbReference type="ChEBI" id="CHEBI:30616"/>
    </ligand>
</feature>